<dbReference type="EC" id="7.1.1.-" evidence="1"/>
<dbReference type="EMBL" id="CP000088">
    <property type="protein sequence ID" value="AAZ56721.1"/>
    <property type="molecule type" value="Genomic_DNA"/>
</dbReference>
<dbReference type="RefSeq" id="WP_011293111.1">
    <property type="nucleotide sequence ID" value="NC_007333.1"/>
</dbReference>
<dbReference type="SMR" id="Q47LF1"/>
<dbReference type="STRING" id="269800.Tfu_2688"/>
<dbReference type="KEGG" id="tfu:Tfu_2688"/>
<dbReference type="eggNOG" id="COG1005">
    <property type="taxonomic scope" value="Bacteria"/>
</dbReference>
<dbReference type="HOGENOM" id="CLU_015134_0_0_11"/>
<dbReference type="OrthoDB" id="9803734at2"/>
<dbReference type="GO" id="GO:0005886">
    <property type="term" value="C:plasma membrane"/>
    <property type="evidence" value="ECO:0007669"/>
    <property type="project" value="UniProtKB-SubCell"/>
</dbReference>
<dbReference type="GO" id="GO:0003954">
    <property type="term" value="F:NADH dehydrogenase activity"/>
    <property type="evidence" value="ECO:0007669"/>
    <property type="project" value="TreeGrafter"/>
</dbReference>
<dbReference type="GO" id="GO:0016655">
    <property type="term" value="F:oxidoreductase activity, acting on NAD(P)H, quinone or similar compound as acceptor"/>
    <property type="evidence" value="ECO:0007669"/>
    <property type="project" value="UniProtKB-UniRule"/>
</dbReference>
<dbReference type="GO" id="GO:0048038">
    <property type="term" value="F:quinone binding"/>
    <property type="evidence" value="ECO:0007669"/>
    <property type="project" value="UniProtKB-KW"/>
</dbReference>
<dbReference type="GO" id="GO:0009060">
    <property type="term" value="P:aerobic respiration"/>
    <property type="evidence" value="ECO:0007669"/>
    <property type="project" value="TreeGrafter"/>
</dbReference>
<dbReference type="HAMAP" id="MF_01350">
    <property type="entry name" value="NDH1_NuoH"/>
    <property type="match status" value="1"/>
</dbReference>
<dbReference type="InterPro" id="IPR001694">
    <property type="entry name" value="NADH_UbQ_OxRdtase_su1/FPO"/>
</dbReference>
<dbReference type="InterPro" id="IPR018086">
    <property type="entry name" value="NADH_UbQ_OxRdtase_su1_CS"/>
</dbReference>
<dbReference type="NCBIfam" id="NF004741">
    <property type="entry name" value="PRK06076.1-2"/>
    <property type="match status" value="1"/>
</dbReference>
<dbReference type="NCBIfam" id="NF004743">
    <property type="entry name" value="PRK06076.1-4"/>
    <property type="match status" value="1"/>
</dbReference>
<dbReference type="PANTHER" id="PTHR11432">
    <property type="entry name" value="NADH DEHYDROGENASE SUBUNIT 1"/>
    <property type="match status" value="1"/>
</dbReference>
<dbReference type="PANTHER" id="PTHR11432:SF3">
    <property type="entry name" value="NADH-UBIQUINONE OXIDOREDUCTASE CHAIN 1"/>
    <property type="match status" value="1"/>
</dbReference>
<dbReference type="Pfam" id="PF00146">
    <property type="entry name" value="NADHdh"/>
    <property type="match status" value="1"/>
</dbReference>
<dbReference type="PROSITE" id="PS00668">
    <property type="entry name" value="COMPLEX1_ND1_2"/>
    <property type="match status" value="1"/>
</dbReference>
<proteinExistence type="inferred from homology"/>
<organism>
    <name type="scientific">Thermobifida fusca (strain YX)</name>
    <dbReference type="NCBI Taxonomy" id="269800"/>
    <lineage>
        <taxon>Bacteria</taxon>
        <taxon>Bacillati</taxon>
        <taxon>Actinomycetota</taxon>
        <taxon>Actinomycetes</taxon>
        <taxon>Streptosporangiales</taxon>
        <taxon>Nocardiopsidaceae</taxon>
        <taxon>Thermobifida</taxon>
    </lineage>
</organism>
<comment type="function">
    <text evidence="1">NDH-1 shuttles electrons from NADH, via FMN and iron-sulfur (Fe-S) centers, to quinones in the respiratory chain. The immediate electron acceptor for the enzyme in this species is believed to be ubiquinone. Couples the redox reaction to proton translocation (for every two electrons transferred, four hydrogen ions are translocated across the cytoplasmic membrane), and thus conserves the redox energy in a proton gradient. This subunit may bind ubiquinone.</text>
</comment>
<comment type="catalytic activity">
    <reaction evidence="1">
        <text>a quinone + NADH + 5 H(+)(in) = a quinol + NAD(+) + 4 H(+)(out)</text>
        <dbReference type="Rhea" id="RHEA:57888"/>
        <dbReference type="ChEBI" id="CHEBI:15378"/>
        <dbReference type="ChEBI" id="CHEBI:24646"/>
        <dbReference type="ChEBI" id="CHEBI:57540"/>
        <dbReference type="ChEBI" id="CHEBI:57945"/>
        <dbReference type="ChEBI" id="CHEBI:132124"/>
    </reaction>
</comment>
<comment type="subunit">
    <text evidence="1">NDH-1 is composed of 14 different subunits. Subunits NuoA, H, J, K, L, M, N constitute the membrane sector of the complex.</text>
</comment>
<comment type="subcellular location">
    <subcellularLocation>
        <location evidence="1">Cell membrane</location>
        <topology evidence="1">Multi-pass membrane protein</topology>
    </subcellularLocation>
</comment>
<comment type="similarity">
    <text evidence="1">Belongs to the complex I subunit 1 family.</text>
</comment>
<name>NUOH_THEFY</name>
<protein>
    <recommendedName>
        <fullName evidence="1">NADH-quinone oxidoreductase subunit H</fullName>
        <ecNumber evidence="1">7.1.1.-</ecNumber>
    </recommendedName>
    <alternativeName>
        <fullName evidence="1">NADH dehydrogenase I subunit H</fullName>
    </alternativeName>
    <alternativeName>
        <fullName evidence="1">NDH-1 subunit H</fullName>
    </alternativeName>
</protein>
<sequence length="452" mass="49786">MTPTTVVSAAALDAEPGLDAFGNDPWWIILIKALAVFVFLMLCVLMMIMADRKVMGRMQQRHGPNRFGPWGLLQSLADGVKLSLKEDLIPRTVDKVIYIAAPMIAAIPAFFAFSVIPVGPEVTMFGVETRLQLTDLPVAVLLVLATASLGVYGIVLAGWASRSPYPLLGGLRASAQVISYEIAMGLSFIAVFIYAGTLSTSGIVEAQQNIWFAVILFPSFVIYLITMIGETNRLPFDLPEGEGELVGGFMTEYSSMKFTMFFLAEYVNMVTVSAMSVTLFLGGYLAPPPITTFWPGANEGWWPALWWLIKFVCVMFLFVWVRGSLPRVRYDQLMKLGWKILIPIQLVWITAVAVIRVLNNQEYPGYVTAIVVGVFGLLVFLGLWAWSRAAAKAKAQEAAEHEAELRARRENPMYGGFPVPPMIAPHYGTSVLAEEPRYQPASAPKREEVSGA</sequence>
<evidence type="ECO:0000255" key="1">
    <source>
        <dbReference type="HAMAP-Rule" id="MF_01350"/>
    </source>
</evidence>
<reference key="1">
    <citation type="journal article" date="2007" name="J. Bacteriol.">
        <title>Genome sequence and analysis of the soil cellulolytic actinomycete Thermobifida fusca YX.</title>
        <authorList>
            <person name="Lykidis A."/>
            <person name="Mavromatis K."/>
            <person name="Ivanova N."/>
            <person name="Anderson I."/>
            <person name="Land M."/>
            <person name="DiBartolo G."/>
            <person name="Martinez M."/>
            <person name="Lapidus A."/>
            <person name="Lucas S."/>
            <person name="Copeland A."/>
            <person name="Richardson P."/>
            <person name="Wilson D.B."/>
            <person name="Kyrpides N."/>
        </authorList>
    </citation>
    <scope>NUCLEOTIDE SEQUENCE [LARGE SCALE GENOMIC DNA]</scope>
    <source>
        <strain>YX</strain>
    </source>
</reference>
<accession>Q47LF1</accession>
<feature type="chain" id="PRO_0000244960" description="NADH-quinone oxidoreductase subunit H">
    <location>
        <begin position="1"/>
        <end position="452"/>
    </location>
</feature>
<feature type="transmembrane region" description="Helical" evidence="1">
    <location>
        <begin position="28"/>
        <end position="48"/>
    </location>
</feature>
<feature type="transmembrane region" description="Helical" evidence="1">
    <location>
        <begin position="96"/>
        <end position="116"/>
    </location>
</feature>
<feature type="transmembrane region" description="Helical" evidence="1">
    <location>
        <begin position="136"/>
        <end position="156"/>
    </location>
</feature>
<feature type="transmembrane region" description="Helical" evidence="1">
    <location>
        <begin position="177"/>
        <end position="197"/>
    </location>
</feature>
<feature type="transmembrane region" description="Helical" evidence="1">
    <location>
        <begin position="210"/>
        <end position="230"/>
    </location>
</feature>
<feature type="transmembrane region" description="Helical" evidence="1">
    <location>
        <begin position="264"/>
        <end position="286"/>
    </location>
</feature>
<feature type="transmembrane region" description="Helical" evidence="1">
    <location>
        <begin position="301"/>
        <end position="321"/>
    </location>
</feature>
<feature type="transmembrane region" description="Helical" evidence="1">
    <location>
        <begin position="335"/>
        <end position="355"/>
    </location>
</feature>
<feature type="transmembrane region" description="Helical" evidence="1">
    <location>
        <begin position="366"/>
        <end position="386"/>
    </location>
</feature>
<keyword id="KW-1003">Cell membrane</keyword>
<keyword id="KW-0472">Membrane</keyword>
<keyword id="KW-0520">NAD</keyword>
<keyword id="KW-0874">Quinone</keyword>
<keyword id="KW-1278">Translocase</keyword>
<keyword id="KW-0812">Transmembrane</keyword>
<keyword id="KW-1133">Transmembrane helix</keyword>
<keyword id="KW-0830">Ubiquinone</keyword>
<gene>
    <name evidence="1" type="primary">nuoH</name>
    <name type="ordered locus">Tfu_2688</name>
</gene>